<evidence type="ECO:0000250" key="1"/>
<evidence type="ECO:0000256" key="2">
    <source>
        <dbReference type="SAM" id="MobiDB-lite"/>
    </source>
</evidence>
<evidence type="ECO:0000305" key="3"/>
<protein>
    <recommendedName>
        <fullName>Pre-mRNA-splicing factor SLU7</fullName>
    </recommendedName>
</protein>
<name>SLU7_ORYSI</name>
<dbReference type="EMBL" id="CM000133">
    <property type="protein sequence ID" value="EEC82847.1"/>
    <property type="molecule type" value="Genomic_DNA"/>
</dbReference>
<dbReference type="SMR" id="A2YQU8"/>
<dbReference type="STRING" id="39946.A2YQU8"/>
<dbReference type="iPTMnet" id="A2YQU8"/>
<dbReference type="EnsemblPlants" id="BGIOSGA027917-TA">
    <property type="protein sequence ID" value="BGIOSGA027917-PA"/>
    <property type="gene ID" value="BGIOSGA027917"/>
</dbReference>
<dbReference type="EnsemblPlants" id="OsGoSa_08g0001710.01">
    <property type="protein sequence ID" value="OsGoSa_08g0001710.01"/>
    <property type="gene ID" value="OsGoSa_08g0001710"/>
</dbReference>
<dbReference type="EnsemblPlants" id="OsIR64_08g0001620.01">
    <property type="protein sequence ID" value="OsIR64_08g0001620.01"/>
    <property type="gene ID" value="OsIR64_08g0001620"/>
</dbReference>
<dbReference type="EnsemblPlants" id="OsKYG_08g0001800.01">
    <property type="protein sequence ID" value="OsKYG_08g0001800.01"/>
    <property type="gene ID" value="OsKYG_08g0001800"/>
</dbReference>
<dbReference type="EnsemblPlants" id="OsLaMu_08g0001730.01">
    <property type="protein sequence ID" value="OsLaMu_08g0001730.01"/>
    <property type="gene ID" value="OsLaMu_08g0001730"/>
</dbReference>
<dbReference type="EnsemblPlants" id="OsLiXu_08g0001800.01">
    <property type="protein sequence ID" value="OsLiXu_08g0001800.01"/>
    <property type="gene ID" value="OsLiXu_08g0001800"/>
</dbReference>
<dbReference type="EnsemblPlants" id="OsMH63_08G001770_01">
    <property type="protein sequence ID" value="OsMH63_08G001770_01"/>
    <property type="gene ID" value="OsMH63_08G001770"/>
</dbReference>
<dbReference type="EnsemblPlants" id="OsPr106_08g0001730.01">
    <property type="protein sequence ID" value="OsPr106_08g0001730.01"/>
    <property type="gene ID" value="OsPr106_08g0001730"/>
</dbReference>
<dbReference type="EnsemblPlants" id="OsZS97_08G001800_01">
    <property type="protein sequence ID" value="OsZS97_08G001800_01"/>
    <property type="gene ID" value="OsZS97_08G001800"/>
</dbReference>
<dbReference type="Gramene" id="BGIOSGA027917-TA">
    <property type="protein sequence ID" value="BGIOSGA027917-PA"/>
    <property type="gene ID" value="BGIOSGA027917"/>
</dbReference>
<dbReference type="Gramene" id="OsGoSa_08g0001710.01">
    <property type="protein sequence ID" value="OsGoSa_08g0001710.01"/>
    <property type="gene ID" value="OsGoSa_08g0001710"/>
</dbReference>
<dbReference type="Gramene" id="OsIR64_08g0001620.01">
    <property type="protein sequence ID" value="OsIR64_08g0001620.01"/>
    <property type="gene ID" value="OsIR64_08g0001620"/>
</dbReference>
<dbReference type="Gramene" id="OsKYG_08g0001800.01">
    <property type="protein sequence ID" value="OsKYG_08g0001800.01"/>
    <property type="gene ID" value="OsKYG_08g0001800"/>
</dbReference>
<dbReference type="Gramene" id="OsLaMu_08g0001730.01">
    <property type="protein sequence ID" value="OsLaMu_08g0001730.01"/>
    <property type="gene ID" value="OsLaMu_08g0001730"/>
</dbReference>
<dbReference type="Gramene" id="OsLiXu_08g0001800.01">
    <property type="protein sequence ID" value="OsLiXu_08g0001800.01"/>
    <property type="gene ID" value="OsLiXu_08g0001800"/>
</dbReference>
<dbReference type="Gramene" id="OsMH63_08G001770_01">
    <property type="protein sequence ID" value="OsMH63_08G001770_01"/>
    <property type="gene ID" value="OsMH63_08G001770"/>
</dbReference>
<dbReference type="Gramene" id="OsPr106_08g0001730.01">
    <property type="protein sequence ID" value="OsPr106_08g0001730.01"/>
    <property type="gene ID" value="OsPr106_08g0001730"/>
</dbReference>
<dbReference type="Gramene" id="OsZS97_08G001800_01">
    <property type="protein sequence ID" value="OsZS97_08G001800_01"/>
    <property type="gene ID" value="OsZS97_08G001800"/>
</dbReference>
<dbReference type="HOGENOM" id="CLU_019317_3_1_1"/>
<dbReference type="OMA" id="KYAWESQ"/>
<dbReference type="OrthoDB" id="249612at2759"/>
<dbReference type="Proteomes" id="UP000007015">
    <property type="component" value="Chromosome 8"/>
</dbReference>
<dbReference type="GO" id="GO:0005681">
    <property type="term" value="C:spliceosomal complex"/>
    <property type="evidence" value="ECO:0007669"/>
    <property type="project" value="UniProtKB-KW"/>
</dbReference>
<dbReference type="GO" id="GO:0030628">
    <property type="term" value="F:pre-mRNA 3'-splice site binding"/>
    <property type="evidence" value="ECO:0007669"/>
    <property type="project" value="InterPro"/>
</dbReference>
<dbReference type="GO" id="GO:0008270">
    <property type="term" value="F:zinc ion binding"/>
    <property type="evidence" value="ECO:0007669"/>
    <property type="project" value="UniProtKB-KW"/>
</dbReference>
<dbReference type="GO" id="GO:0000398">
    <property type="term" value="P:mRNA splicing, via spliceosome"/>
    <property type="evidence" value="ECO:0007669"/>
    <property type="project" value="InterPro"/>
</dbReference>
<dbReference type="InterPro" id="IPR021715">
    <property type="entry name" value="Slu7_dom"/>
</dbReference>
<dbReference type="InterPro" id="IPR039974">
    <property type="entry name" value="Splicing_factor_SLU7"/>
</dbReference>
<dbReference type="PANTHER" id="PTHR12942:SF2">
    <property type="entry name" value="PRE-MRNA-SPLICING FACTOR SLU7"/>
    <property type="match status" value="1"/>
</dbReference>
<dbReference type="PANTHER" id="PTHR12942">
    <property type="entry name" value="STEP II SPLICING FACTOR SLU7"/>
    <property type="match status" value="1"/>
</dbReference>
<dbReference type="Pfam" id="PF11708">
    <property type="entry name" value="Slu7"/>
    <property type="match status" value="1"/>
</dbReference>
<organism>
    <name type="scientific">Oryza sativa subsp. indica</name>
    <name type="common">Rice</name>
    <dbReference type="NCBI Taxonomy" id="39946"/>
    <lineage>
        <taxon>Eukaryota</taxon>
        <taxon>Viridiplantae</taxon>
        <taxon>Streptophyta</taxon>
        <taxon>Embryophyta</taxon>
        <taxon>Tracheophyta</taxon>
        <taxon>Spermatophyta</taxon>
        <taxon>Magnoliopsida</taxon>
        <taxon>Liliopsida</taxon>
        <taxon>Poales</taxon>
        <taxon>Poaceae</taxon>
        <taxon>BOP clade</taxon>
        <taxon>Oryzoideae</taxon>
        <taxon>Oryzeae</taxon>
        <taxon>Oryzinae</taxon>
        <taxon>Oryza</taxon>
        <taxon>Oryza sativa</taxon>
    </lineage>
</organism>
<keyword id="KW-0479">Metal-binding</keyword>
<keyword id="KW-0507">mRNA processing</keyword>
<keyword id="KW-0508">mRNA splicing</keyword>
<keyword id="KW-0539">Nucleus</keyword>
<keyword id="KW-1185">Reference proteome</keyword>
<keyword id="KW-0747">Spliceosome</keyword>
<keyword id="KW-0862">Zinc</keyword>
<keyword id="KW-0863">Zinc-finger</keyword>
<accession>A2YQU8</accession>
<accession>B8BAF2</accession>
<reference key="1">
    <citation type="journal article" date="2005" name="PLoS Biol.">
        <title>The genomes of Oryza sativa: a history of duplications.</title>
        <authorList>
            <person name="Yu J."/>
            <person name="Wang J."/>
            <person name="Lin W."/>
            <person name="Li S."/>
            <person name="Li H."/>
            <person name="Zhou J."/>
            <person name="Ni P."/>
            <person name="Dong W."/>
            <person name="Hu S."/>
            <person name="Zeng C."/>
            <person name="Zhang J."/>
            <person name="Zhang Y."/>
            <person name="Li R."/>
            <person name="Xu Z."/>
            <person name="Li S."/>
            <person name="Li X."/>
            <person name="Zheng H."/>
            <person name="Cong L."/>
            <person name="Lin L."/>
            <person name="Yin J."/>
            <person name="Geng J."/>
            <person name="Li G."/>
            <person name="Shi J."/>
            <person name="Liu J."/>
            <person name="Lv H."/>
            <person name="Li J."/>
            <person name="Wang J."/>
            <person name="Deng Y."/>
            <person name="Ran L."/>
            <person name="Shi X."/>
            <person name="Wang X."/>
            <person name="Wu Q."/>
            <person name="Li C."/>
            <person name="Ren X."/>
            <person name="Wang J."/>
            <person name="Wang X."/>
            <person name="Li D."/>
            <person name="Liu D."/>
            <person name="Zhang X."/>
            <person name="Ji Z."/>
            <person name="Zhao W."/>
            <person name="Sun Y."/>
            <person name="Zhang Z."/>
            <person name="Bao J."/>
            <person name="Han Y."/>
            <person name="Dong L."/>
            <person name="Ji J."/>
            <person name="Chen P."/>
            <person name="Wu S."/>
            <person name="Liu J."/>
            <person name="Xiao Y."/>
            <person name="Bu D."/>
            <person name="Tan J."/>
            <person name="Yang L."/>
            <person name="Ye C."/>
            <person name="Zhang J."/>
            <person name="Xu J."/>
            <person name="Zhou Y."/>
            <person name="Yu Y."/>
            <person name="Zhang B."/>
            <person name="Zhuang S."/>
            <person name="Wei H."/>
            <person name="Liu B."/>
            <person name="Lei M."/>
            <person name="Yu H."/>
            <person name="Li Y."/>
            <person name="Xu H."/>
            <person name="Wei S."/>
            <person name="He X."/>
            <person name="Fang L."/>
            <person name="Zhang Z."/>
            <person name="Zhang Y."/>
            <person name="Huang X."/>
            <person name="Su Z."/>
            <person name="Tong W."/>
            <person name="Li J."/>
            <person name="Tong Z."/>
            <person name="Li S."/>
            <person name="Ye J."/>
            <person name="Wang L."/>
            <person name="Fang L."/>
            <person name="Lei T."/>
            <person name="Chen C.-S."/>
            <person name="Chen H.-C."/>
            <person name="Xu Z."/>
            <person name="Li H."/>
            <person name="Huang H."/>
            <person name="Zhang F."/>
            <person name="Xu H."/>
            <person name="Li N."/>
            <person name="Zhao C."/>
            <person name="Li S."/>
            <person name="Dong L."/>
            <person name="Huang Y."/>
            <person name="Li L."/>
            <person name="Xi Y."/>
            <person name="Qi Q."/>
            <person name="Li W."/>
            <person name="Zhang B."/>
            <person name="Hu W."/>
            <person name="Zhang Y."/>
            <person name="Tian X."/>
            <person name="Jiao Y."/>
            <person name="Liang X."/>
            <person name="Jin J."/>
            <person name="Gao L."/>
            <person name="Zheng W."/>
            <person name="Hao B."/>
            <person name="Liu S.-M."/>
            <person name="Wang W."/>
            <person name="Yuan L."/>
            <person name="Cao M."/>
            <person name="McDermott J."/>
            <person name="Samudrala R."/>
            <person name="Wang J."/>
            <person name="Wong G.K.-S."/>
            <person name="Yang H."/>
        </authorList>
    </citation>
    <scope>NUCLEOTIDE SEQUENCE [LARGE SCALE GENOMIC DNA]</scope>
    <source>
        <strain>cv. 93-11</strain>
    </source>
</reference>
<feature type="chain" id="PRO_0000289205" description="Pre-mRNA-splicing factor SLU7">
    <location>
        <begin position="1"/>
        <end position="536"/>
    </location>
</feature>
<feature type="zinc finger region" description="CCHC-type">
    <location>
        <begin position="94"/>
        <end position="111"/>
    </location>
</feature>
<feature type="region of interest" description="Disordered" evidence="2">
    <location>
        <begin position="22"/>
        <end position="42"/>
    </location>
</feature>
<feature type="region of interest" description="Disordered" evidence="2">
    <location>
        <begin position="178"/>
        <end position="201"/>
    </location>
</feature>
<feature type="compositionally biased region" description="Acidic residues" evidence="2">
    <location>
        <begin position="182"/>
        <end position="200"/>
    </location>
</feature>
<sequence length="536" mass="62076">MATASVSFKSREDHRKQLELEEARKAGLAPAEVDEDGKEINPHIPQYMSSAPWYLNADKPSLKHQRNWKSDPNYTKSWYDRGAKLFQANKYRKGACENCGAMTHDKKSCMERPRSVGAKWTNINIAPDEKVESFELDYDGKRDRWNGYDPSTYTRVIADYEAREEARKKYLKEQQLKKLEEKDGEEGDENVASEEEDEEDGLKIDEAKVDESAQMDFAKVEKRVRTTGGGSTGTVRNLRIREDTAKYLLNLDVNSAYYDPKTRSMREDPLPDADPNDKFYVGDNQNRLSGQALEFKQLNIHAWEAFDKGQDIHMQAAPSQAELLFKSFKIKKEKLKSENKDKIMEKYGNAASEEPIPRELLLGQSEKEIEYDRTGRIIKGQDVALPKSKYEEDVFINNHTTVWGSWWKDHQWGYKCCKQTIRNSYCTGLAGIEAAEASADLMKANMARKEAAEDEPVRHEEKRLATWGTDVPNDIVLDKKLLDEALKKEGARRKEEMDERKRKYNVKWNDEVTAEDMEAYRMKRIHHDDPMRDFLH</sequence>
<proteinExistence type="inferred from homology"/>
<comment type="function">
    <text evidence="1">Participates in the second catalytic step of pre-mRNA splicing, when the free hydroxyl group of exon I attacks the 3'-splice site to generate spliced mRNA and the excised lariat intron.</text>
</comment>
<comment type="subcellular location">
    <subcellularLocation>
        <location evidence="1">Nucleus</location>
    </subcellularLocation>
</comment>
<comment type="similarity">
    <text evidence="3">Belongs to the SLU7 family.</text>
</comment>
<gene>
    <name type="ORF">OsI_27673</name>
</gene>